<name>MUKE_VIBVU</name>
<proteinExistence type="inferred from homology"/>
<organism>
    <name type="scientific">Vibrio vulnificus (strain CMCP6)</name>
    <dbReference type="NCBI Taxonomy" id="216895"/>
    <lineage>
        <taxon>Bacteria</taxon>
        <taxon>Pseudomonadati</taxon>
        <taxon>Pseudomonadota</taxon>
        <taxon>Gammaproteobacteria</taxon>
        <taxon>Vibrionales</taxon>
        <taxon>Vibrionaceae</taxon>
        <taxon>Vibrio</taxon>
    </lineage>
</organism>
<comment type="function">
    <text evidence="1">Involved in chromosome condensation, segregation and cell cycle progression. May participate in facilitating chromosome segregation by condensation DNA from both sides of a centrally located replisome during cell division. Probably acts via its interaction with MukB and MukF.</text>
</comment>
<comment type="subunit">
    <text evidence="1">Interacts, and probably forms a ternary complex, with MukF and MukB. The complex formation is stimulated by calcium or magnesium.</text>
</comment>
<comment type="subcellular location">
    <subcellularLocation>
        <location evidence="1">Cytoplasm</location>
        <location evidence="1">Nucleoid</location>
    </subcellularLocation>
    <text evidence="1">Restricted to the nucleoid region.</text>
</comment>
<comment type="similarity">
    <text evidence="1">Belongs to the MukE family.</text>
</comment>
<comment type="sequence caution" evidence="3">
    <conflict type="erroneous initiation">
        <sequence resource="EMBL-CDS" id="AAO10529"/>
    </conflict>
    <text>Extended N-terminus.</text>
</comment>
<evidence type="ECO:0000255" key="1">
    <source>
        <dbReference type="HAMAP-Rule" id="MF_01802"/>
    </source>
</evidence>
<evidence type="ECO:0000256" key="2">
    <source>
        <dbReference type="SAM" id="MobiDB-lite"/>
    </source>
</evidence>
<evidence type="ECO:0000305" key="3"/>
<accession>Q8DAP9</accession>
<reference key="1">
    <citation type="submission" date="2002-12" db="EMBL/GenBank/DDBJ databases">
        <title>Complete genome sequence of Vibrio vulnificus CMCP6.</title>
        <authorList>
            <person name="Rhee J.H."/>
            <person name="Kim S.Y."/>
            <person name="Chung S.S."/>
            <person name="Kim J.J."/>
            <person name="Moon Y.H."/>
            <person name="Jeong H."/>
            <person name="Choy H.E."/>
        </authorList>
    </citation>
    <scope>NUCLEOTIDE SEQUENCE [LARGE SCALE GENOMIC DNA]</scope>
    <source>
        <strain>CMCP6</strain>
    </source>
</reference>
<dbReference type="EMBL" id="AE016795">
    <property type="protein sequence ID" value="AAO10529.2"/>
    <property type="status" value="ALT_INIT"/>
    <property type="molecule type" value="Genomic_DNA"/>
</dbReference>
<dbReference type="SMR" id="Q8DAP9"/>
<dbReference type="KEGG" id="vvu:VV1_2144"/>
<dbReference type="HOGENOM" id="CLU_1146408_0_0_6"/>
<dbReference type="Proteomes" id="UP000002275">
    <property type="component" value="Chromosome 1"/>
</dbReference>
<dbReference type="GO" id="GO:0005737">
    <property type="term" value="C:cytoplasm"/>
    <property type="evidence" value="ECO:0007669"/>
    <property type="project" value="UniProtKB-UniRule"/>
</dbReference>
<dbReference type="GO" id="GO:0009295">
    <property type="term" value="C:nucleoid"/>
    <property type="evidence" value="ECO:0007669"/>
    <property type="project" value="UniProtKB-SubCell"/>
</dbReference>
<dbReference type="GO" id="GO:0051301">
    <property type="term" value="P:cell division"/>
    <property type="evidence" value="ECO:0007669"/>
    <property type="project" value="UniProtKB-KW"/>
</dbReference>
<dbReference type="GO" id="GO:0030261">
    <property type="term" value="P:chromosome condensation"/>
    <property type="evidence" value="ECO:0007669"/>
    <property type="project" value="UniProtKB-KW"/>
</dbReference>
<dbReference type="GO" id="GO:0007059">
    <property type="term" value="P:chromosome segregation"/>
    <property type="evidence" value="ECO:0007669"/>
    <property type="project" value="UniProtKB-UniRule"/>
</dbReference>
<dbReference type="GO" id="GO:0006260">
    <property type="term" value="P:DNA replication"/>
    <property type="evidence" value="ECO:0007669"/>
    <property type="project" value="UniProtKB-UniRule"/>
</dbReference>
<dbReference type="Gene3D" id="1.10.10.2250">
    <property type="match status" value="1"/>
</dbReference>
<dbReference type="Gene3D" id="1.10.10.2260">
    <property type="entry name" value="MukE-like family, C-terminal domain"/>
    <property type="match status" value="1"/>
</dbReference>
<dbReference type="HAMAP" id="MF_01802">
    <property type="entry name" value="MukE"/>
    <property type="match status" value="1"/>
</dbReference>
<dbReference type="InterPro" id="IPR042037">
    <property type="entry name" value="MukE_C"/>
</dbReference>
<dbReference type="InterPro" id="IPR042038">
    <property type="entry name" value="MukE_N"/>
</dbReference>
<dbReference type="InterPro" id="IPR007385">
    <property type="entry name" value="Scp_MukE"/>
</dbReference>
<dbReference type="NCBIfam" id="NF003602">
    <property type="entry name" value="PRK05256.1"/>
    <property type="match status" value="1"/>
</dbReference>
<dbReference type="Pfam" id="PF04288">
    <property type="entry name" value="MukE"/>
    <property type="match status" value="1"/>
</dbReference>
<feature type="chain" id="PRO_0000206806" description="Chromosome partition protein MukE">
    <location>
        <begin position="1"/>
        <end position="231"/>
    </location>
</feature>
<feature type="region of interest" description="Disordered" evidence="2">
    <location>
        <begin position="211"/>
        <end position="231"/>
    </location>
</feature>
<feature type="compositionally biased region" description="Acidic residues" evidence="2">
    <location>
        <begin position="214"/>
        <end position="231"/>
    </location>
</feature>
<gene>
    <name evidence="1" type="primary">mukE</name>
    <name type="ordered locus">VV1_2144</name>
</gene>
<keyword id="KW-0131">Cell cycle</keyword>
<keyword id="KW-0132">Cell division</keyword>
<keyword id="KW-0159">Chromosome partition</keyword>
<keyword id="KW-0963">Cytoplasm</keyword>
<keyword id="KW-0226">DNA condensation</keyword>
<sequence>MPENLAKAICNPLFPALDSMLRAGRHISSEDLDNHALLSDYEVELSAFYQRYNTELVKAPEGFFYLRPRSTSLIARSVLSELDMLVGKVLCFLYLSPERLAHEGIFTNQELYEELIALTDEKKLMKLVTNRASGSDLDREKLFEKVRTSLRRLRRLGMIINVGDSGKFSISEAVFRFGADVRAGDDIREAQLRLIRDGEAVVHTQEPTQASLLADEEEQDYNEQAELEGEA</sequence>
<protein>
    <recommendedName>
        <fullName evidence="1">Chromosome partition protein MukE</fullName>
    </recommendedName>
</protein>